<name>APC5C_XENLA</name>
<proteinExistence type="evidence at transcript level"/>
<comment type="function">
    <text evidence="1 2 3">Component of the Arp2/3 complex, a multiprotein complex that mediates actin polymerization upon stimulation by nucleation-promoting factor (NPF). The Arp2/3 complex mediates the formation of branched actin networks in the cytoplasm, providing the force for cell motility (By similarity). In addition to its role in the cytoplasmic cytoskeleton, the Arp2/3 complex also promotes actin polymerization in the nucleus, thereby regulating gene transcription and repair of damaged DNA (By similarity). The Arp2/3 complex promotes homologous recombination (HR) repair in response to DNA damage by promoting nuclear actin polymerization, leading to drive motility of double-strand breaks (DSBs) (By similarity).</text>
</comment>
<comment type="subunit">
    <text evidence="3">Component of the Arp2/3 complex composed of actr2/arp2, actr3/arp3, arpc1 (arpc1a or arpc1b), arpc2, arpc3, arpc4 and arpc5.</text>
</comment>
<comment type="subcellular location">
    <subcellularLocation>
        <location evidence="2">Cytoplasm</location>
        <location evidence="2">Cytoskeleton</location>
    </subcellularLocation>
    <subcellularLocation>
        <location evidence="2">Cell projection</location>
    </subcellularLocation>
    <subcellularLocation>
        <location evidence="3">Nucleus</location>
    </subcellularLocation>
</comment>
<comment type="similarity">
    <text evidence="5">Belongs to the ARPC5 family.</text>
</comment>
<keyword id="KW-0009">Actin-binding</keyword>
<keyword id="KW-0966">Cell projection</keyword>
<keyword id="KW-0963">Cytoplasm</keyword>
<keyword id="KW-0206">Cytoskeleton</keyword>
<keyword id="KW-0539">Nucleus</keyword>
<keyword id="KW-1185">Reference proteome</keyword>
<accession>Q641B9</accession>
<dbReference type="EMBL" id="BC082419">
    <property type="protein sequence ID" value="AAH82419.1"/>
    <property type="molecule type" value="mRNA"/>
</dbReference>
<dbReference type="EMBL" id="CM004473">
    <property type="protein sequence ID" value="OCT82798.1"/>
    <property type="molecule type" value="Genomic_DNA"/>
</dbReference>
<dbReference type="SMR" id="Q641B9"/>
<dbReference type="STRING" id="8355.Q641B9"/>
<dbReference type="PaxDb" id="8355-Q641B9"/>
<dbReference type="DNASU" id="447745"/>
<dbReference type="GeneID" id="447745"/>
<dbReference type="KEGG" id="xla:447745"/>
<dbReference type="AGR" id="Xenbase:XB-GENE-17330993"/>
<dbReference type="CTD" id="447745"/>
<dbReference type="OMA" id="NDSNQFR"/>
<dbReference type="OrthoDB" id="429520at2759"/>
<dbReference type="Proteomes" id="UP000186698">
    <property type="component" value="Chromosome 4S"/>
</dbReference>
<dbReference type="Proteomes" id="UP000694892">
    <property type="component" value="Chromosome 4S"/>
</dbReference>
<dbReference type="Bgee" id="447745">
    <property type="expression patterns" value="Expressed in spleen and 19 other cell types or tissues"/>
</dbReference>
<dbReference type="GO" id="GO:0005885">
    <property type="term" value="C:Arp2/3 protein complex"/>
    <property type="evidence" value="ECO:0000250"/>
    <property type="project" value="UniProtKB"/>
</dbReference>
<dbReference type="GO" id="GO:0042995">
    <property type="term" value="C:cell projection"/>
    <property type="evidence" value="ECO:0007669"/>
    <property type="project" value="UniProtKB-SubCell"/>
</dbReference>
<dbReference type="GO" id="GO:0005737">
    <property type="term" value="C:cytoplasm"/>
    <property type="evidence" value="ECO:0000318"/>
    <property type="project" value="GO_Central"/>
</dbReference>
<dbReference type="GO" id="GO:0005634">
    <property type="term" value="C:nucleus"/>
    <property type="evidence" value="ECO:0000250"/>
    <property type="project" value="UniProtKB"/>
</dbReference>
<dbReference type="GO" id="GO:0035861">
    <property type="term" value="C:site of double-strand break"/>
    <property type="evidence" value="ECO:0000250"/>
    <property type="project" value="UniProtKB"/>
</dbReference>
<dbReference type="GO" id="GO:0051015">
    <property type="term" value="F:actin filament binding"/>
    <property type="evidence" value="ECO:0000318"/>
    <property type="project" value="GO_Central"/>
</dbReference>
<dbReference type="GO" id="GO:0034314">
    <property type="term" value="P:Arp2/3 complex-mediated actin nucleation"/>
    <property type="evidence" value="ECO:0000318"/>
    <property type="project" value="GO_Central"/>
</dbReference>
<dbReference type="GO" id="GO:0016477">
    <property type="term" value="P:cell migration"/>
    <property type="evidence" value="ECO:0000318"/>
    <property type="project" value="GO_Central"/>
</dbReference>
<dbReference type="GO" id="GO:0030833">
    <property type="term" value="P:regulation of actin filament polymerization"/>
    <property type="evidence" value="ECO:0007669"/>
    <property type="project" value="InterPro"/>
</dbReference>
<dbReference type="FunFam" id="1.25.40.190:FF:000001">
    <property type="entry name" value="Actin-related protein 2/3 complex subunit 5"/>
    <property type="match status" value="1"/>
</dbReference>
<dbReference type="Gene3D" id="1.25.40.190">
    <property type="entry name" value="Actin-related protein 2/3 complex subunit 5"/>
    <property type="match status" value="1"/>
</dbReference>
<dbReference type="InterPro" id="IPR006789">
    <property type="entry name" value="ARPC5"/>
</dbReference>
<dbReference type="InterPro" id="IPR036743">
    <property type="entry name" value="ARPC5_sf"/>
</dbReference>
<dbReference type="PANTHER" id="PTHR12644">
    <property type="entry name" value="ARP2/3 COMPLEX 16 KD SUBUNIT P16-ARC"/>
    <property type="match status" value="1"/>
</dbReference>
<dbReference type="Pfam" id="PF04699">
    <property type="entry name" value="P16-Arc"/>
    <property type="match status" value="1"/>
</dbReference>
<dbReference type="PIRSF" id="PIRSF039096">
    <property type="entry name" value="p16-ARC"/>
    <property type="match status" value="1"/>
</dbReference>
<dbReference type="SUPFAM" id="SSF69103">
    <property type="entry name" value="Arp2/3 complex 16 kDa subunit ARPC5"/>
    <property type="match status" value="1"/>
</dbReference>
<feature type="chain" id="PRO_0000445566" description="Actin-related protein 2/3 complex subunit 5-C">
    <location>
        <begin position="1"/>
        <end position="150"/>
    </location>
</feature>
<feature type="region of interest" description="Disordered" evidence="4">
    <location>
        <begin position="21"/>
        <end position="45"/>
    </location>
</feature>
<sequence length="150" mass="16453">MAKNTVSARFRKVDVDEYDENKFVDEEEAGEGQQGPDEGEVDSAIRGGNMMGALQAVLKNPPINTKNQSAKDQAEHLVLKVLISFKANEIEKAVQSLDKNSMDLLMKYIYKGFESPSDNSSAVLLQWHEKALAVAGVGSIVRVLTARKTV</sequence>
<protein>
    <recommendedName>
        <fullName evidence="5">Actin-related protein 2/3 complex subunit 5-C</fullName>
    </recommendedName>
</protein>
<organism>
    <name type="scientific">Xenopus laevis</name>
    <name type="common">African clawed frog</name>
    <dbReference type="NCBI Taxonomy" id="8355"/>
    <lineage>
        <taxon>Eukaryota</taxon>
        <taxon>Metazoa</taxon>
        <taxon>Chordata</taxon>
        <taxon>Craniata</taxon>
        <taxon>Vertebrata</taxon>
        <taxon>Euteleostomi</taxon>
        <taxon>Amphibia</taxon>
        <taxon>Batrachia</taxon>
        <taxon>Anura</taxon>
        <taxon>Pipoidea</taxon>
        <taxon>Pipidae</taxon>
        <taxon>Xenopodinae</taxon>
        <taxon>Xenopus</taxon>
        <taxon>Xenopus</taxon>
    </lineage>
</organism>
<gene>
    <name type="primary">arpc5-c</name>
    <name evidence="6" type="ORF">XELAEV_18025332mg</name>
</gene>
<reference key="1">
    <citation type="journal article" date="2016" name="Nature">
        <title>Genome evolution in the allotetraploid frog Xenopus laevis.</title>
        <authorList>
            <person name="Session A.M."/>
            <person name="Uno Y."/>
            <person name="Kwon T."/>
            <person name="Chapman J.A."/>
            <person name="Toyoda A."/>
            <person name="Takahashi S."/>
            <person name="Fukui A."/>
            <person name="Hikosaka A."/>
            <person name="Suzuki A."/>
            <person name="Kondo M."/>
            <person name="van Heeringen S.J."/>
            <person name="Quigley I."/>
            <person name="Heinz S."/>
            <person name="Ogino H."/>
            <person name="Ochi H."/>
            <person name="Hellsten U."/>
            <person name="Lyons J.B."/>
            <person name="Simakov O."/>
            <person name="Putnam N."/>
            <person name="Stites J."/>
            <person name="Kuroki Y."/>
            <person name="Tanaka T."/>
            <person name="Michiue T."/>
            <person name="Watanabe M."/>
            <person name="Bogdanovic O."/>
            <person name="Lister R."/>
            <person name="Georgiou G."/>
            <person name="Paranjpe S.S."/>
            <person name="van Kruijsbergen I."/>
            <person name="Shu S."/>
            <person name="Carlson J."/>
            <person name="Kinoshita T."/>
            <person name="Ohta Y."/>
            <person name="Mawaribuchi S."/>
            <person name="Jenkins J."/>
            <person name="Grimwood J."/>
            <person name="Schmutz J."/>
            <person name="Mitros T."/>
            <person name="Mozaffari S.V."/>
            <person name="Suzuki Y."/>
            <person name="Haramoto Y."/>
            <person name="Yamamoto T.S."/>
            <person name="Takagi C."/>
            <person name="Heald R."/>
            <person name="Miller K."/>
            <person name="Haudenschild C."/>
            <person name="Kitzman J."/>
            <person name="Nakayama T."/>
            <person name="Izutsu Y."/>
            <person name="Robert J."/>
            <person name="Fortriede J."/>
            <person name="Burns K."/>
            <person name="Lotay V."/>
            <person name="Karimi K."/>
            <person name="Yasuoka Y."/>
            <person name="Dichmann D.S."/>
            <person name="Flajnik M.F."/>
            <person name="Houston D.W."/>
            <person name="Shendure J."/>
            <person name="DuPasquier L."/>
            <person name="Vize P.D."/>
            <person name="Zorn A.M."/>
            <person name="Ito M."/>
            <person name="Marcotte E.M."/>
            <person name="Wallingford J.B."/>
            <person name="Ito Y."/>
            <person name="Asashima M."/>
            <person name="Ueno N."/>
            <person name="Matsuda Y."/>
            <person name="Veenstra G.J."/>
            <person name="Fujiyama A."/>
            <person name="Harland R.M."/>
            <person name="Taira M."/>
            <person name="Rokhsar D.S."/>
        </authorList>
    </citation>
    <scope>NUCLEOTIDE SEQUENCE [LARGE SCALE GENOMIC DNA]</scope>
    <source>
        <strain>J</strain>
    </source>
</reference>
<reference key="2">
    <citation type="submission" date="2018-01" db="EMBL/GenBank/DDBJ databases">
        <authorList>
            <consortium name="NIH - Xenopus Gene Collection (XGC) project"/>
        </authorList>
    </citation>
    <scope>NUCLEOTIDE SEQUENCE [LARGE SCALE MRNA]</scope>
    <source>
        <tissue>Embryo</tissue>
    </source>
</reference>
<evidence type="ECO:0000250" key="1">
    <source>
        <dbReference type="UniProtKB" id="O15511"/>
    </source>
</evidence>
<evidence type="ECO:0000250" key="2">
    <source>
        <dbReference type="UniProtKB" id="Q68FI4"/>
    </source>
</evidence>
<evidence type="ECO:0000250" key="3">
    <source>
        <dbReference type="UniProtKB" id="Q6DE18"/>
    </source>
</evidence>
<evidence type="ECO:0000256" key="4">
    <source>
        <dbReference type="SAM" id="MobiDB-lite"/>
    </source>
</evidence>
<evidence type="ECO:0000305" key="5"/>
<evidence type="ECO:0000312" key="6">
    <source>
        <dbReference type="EMBL" id="OCT82798.1"/>
    </source>
</evidence>